<reference key="1">
    <citation type="submission" date="2006-09" db="EMBL/GenBank/DDBJ databases">
        <authorList>
            <consortium name="The Klebsiella pneumonia Genome Sequencing Project"/>
            <person name="McClelland M."/>
            <person name="Sanderson E.K."/>
            <person name="Spieth J."/>
            <person name="Clifton W.S."/>
            <person name="Latreille P."/>
            <person name="Sabo A."/>
            <person name="Pepin K."/>
            <person name="Bhonagiri V."/>
            <person name="Porwollik S."/>
            <person name="Ali J."/>
            <person name="Wilson R.K."/>
        </authorList>
    </citation>
    <scope>NUCLEOTIDE SEQUENCE [LARGE SCALE GENOMIC DNA]</scope>
    <source>
        <strain>ATCC 700721 / MGH 78578</strain>
    </source>
</reference>
<organism>
    <name type="scientific">Klebsiella pneumoniae subsp. pneumoniae (strain ATCC 700721 / MGH 78578)</name>
    <dbReference type="NCBI Taxonomy" id="272620"/>
    <lineage>
        <taxon>Bacteria</taxon>
        <taxon>Pseudomonadati</taxon>
        <taxon>Pseudomonadota</taxon>
        <taxon>Gammaproteobacteria</taxon>
        <taxon>Enterobacterales</taxon>
        <taxon>Enterobacteriaceae</taxon>
        <taxon>Klebsiella/Raoultella group</taxon>
        <taxon>Klebsiella</taxon>
        <taxon>Klebsiella pneumoniae complex</taxon>
    </lineage>
</organism>
<dbReference type="EC" id="2.5.1.6" evidence="1"/>
<dbReference type="EMBL" id="CP000647">
    <property type="protein sequence ID" value="ABR78772.1"/>
    <property type="molecule type" value="Genomic_DNA"/>
</dbReference>
<dbReference type="RefSeq" id="WP_004149807.1">
    <property type="nucleotide sequence ID" value="NC_009648.1"/>
</dbReference>
<dbReference type="SMR" id="A6TDV1"/>
<dbReference type="STRING" id="272620.KPN_03375"/>
<dbReference type="jPOST" id="A6TDV1"/>
<dbReference type="PaxDb" id="272620-KPN_03375"/>
<dbReference type="EnsemblBacteria" id="ABR78772">
    <property type="protein sequence ID" value="ABR78772"/>
    <property type="gene ID" value="KPN_03375"/>
</dbReference>
<dbReference type="GeneID" id="93313747"/>
<dbReference type="KEGG" id="kpn:KPN_03375"/>
<dbReference type="HOGENOM" id="CLU_041802_1_1_6"/>
<dbReference type="UniPathway" id="UPA00315">
    <property type="reaction ID" value="UER00080"/>
</dbReference>
<dbReference type="Proteomes" id="UP000000265">
    <property type="component" value="Chromosome"/>
</dbReference>
<dbReference type="GO" id="GO:0005737">
    <property type="term" value="C:cytoplasm"/>
    <property type="evidence" value="ECO:0007669"/>
    <property type="project" value="UniProtKB-SubCell"/>
</dbReference>
<dbReference type="GO" id="GO:0005524">
    <property type="term" value="F:ATP binding"/>
    <property type="evidence" value="ECO:0007669"/>
    <property type="project" value="UniProtKB-UniRule"/>
</dbReference>
<dbReference type="GO" id="GO:0000287">
    <property type="term" value="F:magnesium ion binding"/>
    <property type="evidence" value="ECO:0007669"/>
    <property type="project" value="UniProtKB-UniRule"/>
</dbReference>
<dbReference type="GO" id="GO:0004478">
    <property type="term" value="F:methionine adenosyltransferase activity"/>
    <property type="evidence" value="ECO:0007669"/>
    <property type="project" value="UniProtKB-UniRule"/>
</dbReference>
<dbReference type="GO" id="GO:0006730">
    <property type="term" value="P:one-carbon metabolic process"/>
    <property type="evidence" value="ECO:0007669"/>
    <property type="project" value="UniProtKB-KW"/>
</dbReference>
<dbReference type="GO" id="GO:0006556">
    <property type="term" value="P:S-adenosylmethionine biosynthetic process"/>
    <property type="evidence" value="ECO:0007669"/>
    <property type="project" value="UniProtKB-UniRule"/>
</dbReference>
<dbReference type="CDD" id="cd18079">
    <property type="entry name" value="S-AdoMet_synt"/>
    <property type="match status" value="1"/>
</dbReference>
<dbReference type="FunFam" id="3.30.300.10:FF:000001">
    <property type="entry name" value="S-adenosylmethionine synthase"/>
    <property type="match status" value="1"/>
</dbReference>
<dbReference type="FunFam" id="3.30.300.10:FF:000003">
    <property type="entry name" value="S-adenosylmethionine synthase"/>
    <property type="match status" value="1"/>
</dbReference>
<dbReference type="Gene3D" id="3.30.300.10">
    <property type="match status" value="3"/>
</dbReference>
<dbReference type="HAMAP" id="MF_00086">
    <property type="entry name" value="S_AdoMet_synth1"/>
    <property type="match status" value="1"/>
</dbReference>
<dbReference type="InterPro" id="IPR022631">
    <property type="entry name" value="ADOMET_SYNTHASE_CS"/>
</dbReference>
<dbReference type="InterPro" id="IPR022630">
    <property type="entry name" value="S-AdoMet_synt_C"/>
</dbReference>
<dbReference type="InterPro" id="IPR022629">
    <property type="entry name" value="S-AdoMet_synt_central"/>
</dbReference>
<dbReference type="InterPro" id="IPR022628">
    <property type="entry name" value="S-AdoMet_synt_N"/>
</dbReference>
<dbReference type="InterPro" id="IPR002133">
    <property type="entry name" value="S-AdoMet_synthetase"/>
</dbReference>
<dbReference type="InterPro" id="IPR022636">
    <property type="entry name" value="S-AdoMet_synthetase_sfam"/>
</dbReference>
<dbReference type="NCBIfam" id="TIGR01034">
    <property type="entry name" value="metK"/>
    <property type="match status" value="1"/>
</dbReference>
<dbReference type="PANTHER" id="PTHR11964">
    <property type="entry name" value="S-ADENOSYLMETHIONINE SYNTHETASE"/>
    <property type="match status" value="1"/>
</dbReference>
<dbReference type="Pfam" id="PF02773">
    <property type="entry name" value="S-AdoMet_synt_C"/>
    <property type="match status" value="1"/>
</dbReference>
<dbReference type="Pfam" id="PF02772">
    <property type="entry name" value="S-AdoMet_synt_M"/>
    <property type="match status" value="1"/>
</dbReference>
<dbReference type="Pfam" id="PF00438">
    <property type="entry name" value="S-AdoMet_synt_N"/>
    <property type="match status" value="1"/>
</dbReference>
<dbReference type="PIRSF" id="PIRSF000497">
    <property type="entry name" value="MAT"/>
    <property type="match status" value="1"/>
</dbReference>
<dbReference type="SUPFAM" id="SSF55973">
    <property type="entry name" value="S-adenosylmethionine synthetase"/>
    <property type="match status" value="3"/>
</dbReference>
<dbReference type="PROSITE" id="PS00376">
    <property type="entry name" value="ADOMET_SYNTHASE_1"/>
    <property type="match status" value="1"/>
</dbReference>
<dbReference type="PROSITE" id="PS00377">
    <property type="entry name" value="ADOMET_SYNTHASE_2"/>
    <property type="match status" value="1"/>
</dbReference>
<comment type="function">
    <text evidence="1">Catalyzes the formation of S-adenosylmethionine (AdoMet) from methionine and ATP. The overall synthetic reaction is composed of two sequential steps, AdoMet formation and the subsequent tripolyphosphate hydrolysis which occurs prior to release of AdoMet from the enzyme.</text>
</comment>
<comment type="catalytic activity">
    <reaction evidence="1">
        <text>L-methionine + ATP + H2O = S-adenosyl-L-methionine + phosphate + diphosphate</text>
        <dbReference type="Rhea" id="RHEA:21080"/>
        <dbReference type="ChEBI" id="CHEBI:15377"/>
        <dbReference type="ChEBI" id="CHEBI:30616"/>
        <dbReference type="ChEBI" id="CHEBI:33019"/>
        <dbReference type="ChEBI" id="CHEBI:43474"/>
        <dbReference type="ChEBI" id="CHEBI:57844"/>
        <dbReference type="ChEBI" id="CHEBI:59789"/>
        <dbReference type="EC" id="2.5.1.6"/>
    </reaction>
</comment>
<comment type="cofactor">
    <cofactor evidence="1">
        <name>Mg(2+)</name>
        <dbReference type="ChEBI" id="CHEBI:18420"/>
    </cofactor>
    <text evidence="1">Binds 2 divalent ions per subunit.</text>
</comment>
<comment type="cofactor">
    <cofactor evidence="1">
        <name>K(+)</name>
        <dbReference type="ChEBI" id="CHEBI:29103"/>
    </cofactor>
    <text evidence="1">Binds 1 potassium ion per subunit.</text>
</comment>
<comment type="pathway">
    <text evidence="1">Amino-acid biosynthesis; S-adenosyl-L-methionine biosynthesis; S-adenosyl-L-methionine from L-methionine: step 1/1.</text>
</comment>
<comment type="subunit">
    <text evidence="1">Homotetramer; dimer of dimers.</text>
</comment>
<comment type="subcellular location">
    <subcellularLocation>
        <location evidence="1">Cytoplasm</location>
    </subcellularLocation>
</comment>
<comment type="similarity">
    <text evidence="1">Belongs to the AdoMet synthase family.</text>
</comment>
<protein>
    <recommendedName>
        <fullName evidence="1">S-adenosylmethionine synthase</fullName>
        <shortName evidence="1">AdoMet synthase</shortName>
        <ecNumber evidence="1">2.5.1.6</ecNumber>
    </recommendedName>
    <alternativeName>
        <fullName evidence="1">MAT</fullName>
    </alternativeName>
    <alternativeName>
        <fullName evidence="1">Methionine adenosyltransferase</fullName>
    </alternativeName>
</protein>
<sequence>MAKHLFTSESVSEGHPDKIADQISDAVLDAILEQDPKARVACETYVKTGMVLVGGEITTSAWVDIEEITRNTVREIGYVHSDMGFDANSCAVLSAIGKQSPDINQGVDRADPLEQGAGDQGLMFGYATNETDVLMPAPVTYAHRLVQRQAEVRKNGTLPWLRPDAKSQVTFQYDDGKIVGIDAVVLSTQHAEDIDQKSLQEAVMEEIIKPILPTEWLNASTKFFINPTGRFVIGGPMGDCGLTGRKIIVDTYGGMARHGGGAFSGKDPSKVDRSAAYAARYVAKNIVAAGLADRCEIQVSYAIGVAEPTSIMVETFGTEKVPSEQLTLLVREFFDLRPYGLIQMLDLLHPIYKETAAYGHFGREHFPWEKTDKAALLREAAGLK</sequence>
<gene>
    <name evidence="1" type="primary">metK</name>
    <name type="ordered locus">KPN78578_33110</name>
    <name type="ORF">KPN_03375</name>
</gene>
<feature type="chain" id="PRO_1000007944" description="S-adenosylmethionine synthase">
    <location>
        <begin position="1"/>
        <end position="384"/>
    </location>
</feature>
<feature type="region of interest" description="Flexible loop" evidence="1">
    <location>
        <begin position="99"/>
        <end position="109"/>
    </location>
</feature>
<feature type="binding site" description="in other chain" evidence="1">
    <location>
        <position position="15"/>
    </location>
    <ligand>
        <name>ATP</name>
        <dbReference type="ChEBI" id="CHEBI:30616"/>
        <note>ligand shared between two neighboring subunits</note>
    </ligand>
</feature>
<feature type="binding site" evidence="1">
    <location>
        <position position="17"/>
    </location>
    <ligand>
        <name>Mg(2+)</name>
        <dbReference type="ChEBI" id="CHEBI:18420"/>
    </ligand>
</feature>
<feature type="binding site" evidence="1">
    <location>
        <position position="43"/>
    </location>
    <ligand>
        <name>K(+)</name>
        <dbReference type="ChEBI" id="CHEBI:29103"/>
    </ligand>
</feature>
<feature type="binding site" description="in other chain" evidence="1">
    <location>
        <position position="56"/>
    </location>
    <ligand>
        <name>L-methionine</name>
        <dbReference type="ChEBI" id="CHEBI:57844"/>
        <note>ligand shared between two neighboring subunits</note>
    </ligand>
</feature>
<feature type="binding site" description="in other chain" evidence="1">
    <location>
        <position position="99"/>
    </location>
    <ligand>
        <name>L-methionine</name>
        <dbReference type="ChEBI" id="CHEBI:57844"/>
        <note>ligand shared between two neighboring subunits</note>
    </ligand>
</feature>
<feature type="binding site" description="in other chain" evidence="1">
    <location>
        <begin position="164"/>
        <end position="166"/>
    </location>
    <ligand>
        <name>ATP</name>
        <dbReference type="ChEBI" id="CHEBI:30616"/>
        <note>ligand shared between two neighboring subunits</note>
    </ligand>
</feature>
<feature type="binding site" description="in other chain" evidence="1">
    <location>
        <begin position="230"/>
        <end position="231"/>
    </location>
    <ligand>
        <name>ATP</name>
        <dbReference type="ChEBI" id="CHEBI:30616"/>
        <note>ligand shared between two neighboring subunits</note>
    </ligand>
</feature>
<feature type="binding site" evidence="1">
    <location>
        <position position="239"/>
    </location>
    <ligand>
        <name>ATP</name>
        <dbReference type="ChEBI" id="CHEBI:30616"/>
        <note>ligand shared between two neighboring subunits</note>
    </ligand>
</feature>
<feature type="binding site" evidence="1">
    <location>
        <position position="239"/>
    </location>
    <ligand>
        <name>L-methionine</name>
        <dbReference type="ChEBI" id="CHEBI:57844"/>
        <note>ligand shared between two neighboring subunits</note>
    </ligand>
</feature>
<feature type="binding site" description="in other chain" evidence="1">
    <location>
        <begin position="245"/>
        <end position="246"/>
    </location>
    <ligand>
        <name>ATP</name>
        <dbReference type="ChEBI" id="CHEBI:30616"/>
        <note>ligand shared between two neighboring subunits</note>
    </ligand>
</feature>
<feature type="binding site" evidence="1">
    <location>
        <position position="262"/>
    </location>
    <ligand>
        <name>ATP</name>
        <dbReference type="ChEBI" id="CHEBI:30616"/>
        <note>ligand shared between two neighboring subunits</note>
    </ligand>
</feature>
<feature type="binding site" evidence="1">
    <location>
        <position position="266"/>
    </location>
    <ligand>
        <name>ATP</name>
        <dbReference type="ChEBI" id="CHEBI:30616"/>
        <note>ligand shared between two neighboring subunits</note>
    </ligand>
</feature>
<feature type="binding site" description="in other chain" evidence="1">
    <location>
        <position position="270"/>
    </location>
    <ligand>
        <name>L-methionine</name>
        <dbReference type="ChEBI" id="CHEBI:57844"/>
        <note>ligand shared between two neighboring subunits</note>
    </ligand>
</feature>
<evidence type="ECO:0000255" key="1">
    <source>
        <dbReference type="HAMAP-Rule" id="MF_00086"/>
    </source>
</evidence>
<keyword id="KW-0067">ATP-binding</keyword>
<keyword id="KW-0963">Cytoplasm</keyword>
<keyword id="KW-0460">Magnesium</keyword>
<keyword id="KW-0479">Metal-binding</keyword>
<keyword id="KW-0547">Nucleotide-binding</keyword>
<keyword id="KW-0554">One-carbon metabolism</keyword>
<keyword id="KW-0630">Potassium</keyword>
<keyword id="KW-0808">Transferase</keyword>
<proteinExistence type="inferred from homology"/>
<name>METK_KLEP7</name>
<accession>A6TDV1</accession>